<gene>
    <name evidence="1" type="primary">fadI</name>
    <name type="ordered locus">VV2441</name>
</gene>
<evidence type="ECO:0000255" key="1">
    <source>
        <dbReference type="HAMAP-Rule" id="MF_01618"/>
    </source>
</evidence>
<comment type="function">
    <text evidence="1">Catalyzes the final step of fatty acid oxidation in which acetyl-CoA is released and the CoA ester of a fatty acid two carbons shorter is formed.</text>
</comment>
<comment type="catalytic activity">
    <reaction evidence="1">
        <text>an acyl-CoA + acetyl-CoA = a 3-oxoacyl-CoA + CoA</text>
        <dbReference type="Rhea" id="RHEA:21564"/>
        <dbReference type="ChEBI" id="CHEBI:57287"/>
        <dbReference type="ChEBI" id="CHEBI:57288"/>
        <dbReference type="ChEBI" id="CHEBI:58342"/>
        <dbReference type="ChEBI" id="CHEBI:90726"/>
        <dbReference type="EC" id="2.3.1.16"/>
    </reaction>
</comment>
<comment type="pathway">
    <text evidence="1">Lipid metabolism; fatty acid beta-oxidation.</text>
</comment>
<comment type="subunit">
    <text evidence="1">Heterotetramer of two alpha chains (FadJ) and two beta chains (FadI).</text>
</comment>
<comment type="subcellular location">
    <subcellularLocation>
        <location evidence="1">Cytoplasm</location>
    </subcellularLocation>
</comment>
<comment type="similarity">
    <text evidence="1">Belongs to the thiolase-like superfamily. Thiolase family.</text>
</comment>
<organism>
    <name type="scientific">Vibrio vulnificus (strain YJ016)</name>
    <dbReference type="NCBI Taxonomy" id="196600"/>
    <lineage>
        <taxon>Bacteria</taxon>
        <taxon>Pseudomonadati</taxon>
        <taxon>Pseudomonadota</taxon>
        <taxon>Gammaproteobacteria</taxon>
        <taxon>Vibrionales</taxon>
        <taxon>Vibrionaceae</taxon>
        <taxon>Vibrio</taxon>
    </lineage>
</organism>
<dbReference type="EC" id="2.3.1.16" evidence="1"/>
<dbReference type="EMBL" id="BA000037">
    <property type="protein sequence ID" value="BAC95205.1"/>
    <property type="molecule type" value="Genomic_DNA"/>
</dbReference>
<dbReference type="RefSeq" id="WP_011150895.1">
    <property type="nucleotide sequence ID" value="NC_005139.1"/>
</dbReference>
<dbReference type="SMR" id="Q7MIS4"/>
<dbReference type="STRING" id="672.VV93_v1c21440"/>
<dbReference type="KEGG" id="vvy:VV2441"/>
<dbReference type="PATRIC" id="fig|196600.6.peg.2447"/>
<dbReference type="eggNOG" id="COG0183">
    <property type="taxonomic scope" value="Bacteria"/>
</dbReference>
<dbReference type="HOGENOM" id="CLU_031026_2_0_6"/>
<dbReference type="UniPathway" id="UPA00659"/>
<dbReference type="Proteomes" id="UP000002675">
    <property type="component" value="Chromosome I"/>
</dbReference>
<dbReference type="GO" id="GO:0005829">
    <property type="term" value="C:cytosol"/>
    <property type="evidence" value="ECO:0007669"/>
    <property type="project" value="TreeGrafter"/>
</dbReference>
<dbReference type="GO" id="GO:0003988">
    <property type="term" value="F:acetyl-CoA C-acyltransferase activity"/>
    <property type="evidence" value="ECO:0007669"/>
    <property type="project" value="UniProtKB-UniRule"/>
</dbReference>
<dbReference type="GO" id="GO:0006635">
    <property type="term" value="P:fatty acid beta-oxidation"/>
    <property type="evidence" value="ECO:0007669"/>
    <property type="project" value="UniProtKB-UniRule"/>
</dbReference>
<dbReference type="CDD" id="cd00751">
    <property type="entry name" value="thiolase"/>
    <property type="match status" value="1"/>
</dbReference>
<dbReference type="FunFam" id="3.40.47.10:FF:000011">
    <property type="entry name" value="3-ketoacyl-CoA thiolase"/>
    <property type="match status" value="1"/>
</dbReference>
<dbReference type="Gene3D" id="3.40.47.10">
    <property type="match status" value="1"/>
</dbReference>
<dbReference type="HAMAP" id="MF_01618">
    <property type="entry name" value="FadI"/>
    <property type="match status" value="1"/>
</dbReference>
<dbReference type="InterPro" id="IPR012806">
    <property type="entry name" value="Ac-CoA_C-AcTrfase_FadI"/>
</dbReference>
<dbReference type="InterPro" id="IPR002155">
    <property type="entry name" value="Thiolase"/>
</dbReference>
<dbReference type="InterPro" id="IPR016039">
    <property type="entry name" value="Thiolase-like"/>
</dbReference>
<dbReference type="InterPro" id="IPR020617">
    <property type="entry name" value="Thiolase_C"/>
</dbReference>
<dbReference type="InterPro" id="IPR020613">
    <property type="entry name" value="Thiolase_CS"/>
</dbReference>
<dbReference type="InterPro" id="IPR020616">
    <property type="entry name" value="Thiolase_N"/>
</dbReference>
<dbReference type="NCBIfam" id="TIGR01930">
    <property type="entry name" value="AcCoA-C-Actrans"/>
    <property type="match status" value="1"/>
</dbReference>
<dbReference type="NCBIfam" id="TIGR02446">
    <property type="entry name" value="FadI"/>
    <property type="match status" value="1"/>
</dbReference>
<dbReference type="NCBIfam" id="NF006516">
    <property type="entry name" value="PRK08963.1"/>
    <property type="match status" value="1"/>
</dbReference>
<dbReference type="PANTHER" id="PTHR18919:SF107">
    <property type="entry name" value="ACETYL-COA ACETYLTRANSFERASE, CYTOSOLIC"/>
    <property type="match status" value="1"/>
</dbReference>
<dbReference type="PANTHER" id="PTHR18919">
    <property type="entry name" value="ACETYL-COA C-ACYLTRANSFERASE"/>
    <property type="match status" value="1"/>
</dbReference>
<dbReference type="Pfam" id="PF02803">
    <property type="entry name" value="Thiolase_C"/>
    <property type="match status" value="1"/>
</dbReference>
<dbReference type="Pfam" id="PF00108">
    <property type="entry name" value="Thiolase_N"/>
    <property type="match status" value="1"/>
</dbReference>
<dbReference type="PIRSF" id="PIRSF000429">
    <property type="entry name" value="Ac-CoA_Ac_transf"/>
    <property type="match status" value="1"/>
</dbReference>
<dbReference type="SUPFAM" id="SSF53901">
    <property type="entry name" value="Thiolase-like"/>
    <property type="match status" value="2"/>
</dbReference>
<dbReference type="PROSITE" id="PS00737">
    <property type="entry name" value="THIOLASE_2"/>
    <property type="match status" value="1"/>
</dbReference>
<reference key="1">
    <citation type="journal article" date="2003" name="Genome Res.">
        <title>Comparative genome analysis of Vibrio vulnificus, a marine pathogen.</title>
        <authorList>
            <person name="Chen C.-Y."/>
            <person name="Wu K.-M."/>
            <person name="Chang Y.-C."/>
            <person name="Chang C.-H."/>
            <person name="Tsai H.-C."/>
            <person name="Liao T.-L."/>
            <person name="Liu Y.-M."/>
            <person name="Chen H.-J."/>
            <person name="Shen A.B.-T."/>
            <person name="Li J.-C."/>
            <person name="Su T.-L."/>
            <person name="Shao C.-P."/>
            <person name="Lee C.-T."/>
            <person name="Hor L.-I."/>
            <person name="Tsai S.-F."/>
        </authorList>
    </citation>
    <scope>NUCLEOTIDE SEQUENCE [LARGE SCALE GENOMIC DNA]</scope>
    <source>
        <strain>YJ016</strain>
    </source>
</reference>
<protein>
    <recommendedName>
        <fullName evidence="1">3-ketoacyl-CoA thiolase</fullName>
        <ecNumber evidence="1">2.3.1.16</ecNumber>
    </recommendedName>
    <alternativeName>
        <fullName evidence="1">ACSs</fullName>
    </alternativeName>
    <alternativeName>
        <fullName evidence="1">Acetyl-CoA acyltransferase</fullName>
    </alternativeName>
    <alternativeName>
        <fullName evidence="1">Acyl-CoA ligase</fullName>
    </alternativeName>
    <alternativeName>
        <fullName evidence="1">Beta-ketothiolase</fullName>
    </alternativeName>
    <alternativeName>
        <fullName evidence="1">Fatty acid oxidation complex subunit beta</fullName>
    </alternativeName>
</protein>
<keyword id="KW-0012">Acyltransferase</keyword>
<keyword id="KW-0963">Cytoplasm</keyword>
<keyword id="KW-0276">Fatty acid metabolism</keyword>
<keyword id="KW-0442">Lipid degradation</keyword>
<keyword id="KW-0443">Lipid metabolism</keyword>
<keyword id="KW-0808">Transferase</keyword>
<proteinExistence type="inferred from homology"/>
<name>FADI_VIBVY</name>
<accession>Q7MIS4</accession>
<sequence>MGKQEVKTRQGERVAIVAGLRTPFARQSTEFSQVPAVDLGKMVVSDLLARTDIDPKLIDQVVFGQVVQMPEAPNIAREIVLGTGMNIHTDAYSVTRACATSFQSAVNVAESIMAGAIDIGIAGGADSSSVLPIGVSKKLAASLLALSKTKTLGQKLKVLSGLGLKDLMPVPPAVAEYSTGLSMGQTAEQMAKTHGITRAEQDALAHRSHTLASQAWRDGKIAGEVMTAFPEPYKKWIAEDNNIRHDSTLEGYAKLRPAFDRQYGSVTAANSTPLTDGAAAVLLMREGRAKELGMEILGYIRGYAFSAIGVESDMLMGPSYATSKVLQSTGLALSDLTLIDMHEAFAAQALANVKMFASDKFAQENLGRSKAMGEIDMDKFNVLGGSIAYGHPFAATGARMMTQTLRELKRRGGGLALNTACAAGGLGAAMILEVE</sequence>
<feature type="chain" id="PRO_0000206453" description="3-ketoacyl-CoA thiolase">
    <location>
        <begin position="1"/>
        <end position="435"/>
    </location>
</feature>
<feature type="active site" description="Acyl-thioester intermediate" evidence="1">
    <location>
        <position position="98"/>
    </location>
</feature>
<feature type="active site" description="Proton acceptor" evidence="1">
    <location>
        <position position="391"/>
    </location>
</feature>
<feature type="active site" description="Proton acceptor" evidence="1">
    <location>
        <position position="421"/>
    </location>
</feature>